<gene>
    <name type="primary">MED2</name>
    <name type="ordered locus">YDL005C</name>
    <name type="ORF">D2930</name>
</gene>
<organism>
    <name type="scientific">Saccharomyces cerevisiae (strain ATCC 204508 / S288c)</name>
    <name type="common">Baker's yeast</name>
    <dbReference type="NCBI Taxonomy" id="559292"/>
    <lineage>
        <taxon>Eukaryota</taxon>
        <taxon>Fungi</taxon>
        <taxon>Dikarya</taxon>
        <taxon>Ascomycota</taxon>
        <taxon>Saccharomycotina</taxon>
        <taxon>Saccharomycetes</taxon>
        <taxon>Saccharomycetales</taxon>
        <taxon>Saccharomycetaceae</taxon>
        <taxon>Saccharomyces</taxon>
    </lineage>
</organism>
<name>MED2_YEAST</name>
<proteinExistence type="evidence at protein level"/>
<dbReference type="EMBL" id="Z74053">
    <property type="protein sequence ID" value="CAA98561.1"/>
    <property type="molecule type" value="Genomic_DNA"/>
</dbReference>
<dbReference type="EMBL" id="Z48008">
    <property type="protein sequence ID" value="CAA88056.1"/>
    <property type="molecule type" value="Genomic_DNA"/>
</dbReference>
<dbReference type="EMBL" id="Z48432">
    <property type="protein sequence ID" value="CAA88354.1"/>
    <property type="molecule type" value="Genomic_DNA"/>
</dbReference>
<dbReference type="EMBL" id="AY558156">
    <property type="protein sequence ID" value="AAS56482.1"/>
    <property type="molecule type" value="Genomic_DNA"/>
</dbReference>
<dbReference type="EMBL" id="BK006938">
    <property type="protein sequence ID" value="DAA11843.1"/>
    <property type="molecule type" value="Genomic_DNA"/>
</dbReference>
<dbReference type="PIR" id="S50977">
    <property type="entry name" value="S50977"/>
</dbReference>
<dbReference type="RefSeq" id="NP_010279.3">
    <property type="nucleotide sequence ID" value="NM_001180064.3"/>
</dbReference>
<dbReference type="PDB" id="7UIC">
    <property type="method" value="EM"/>
    <property type="resolution" value="3.70 A"/>
    <property type="chains" value="b=1-431"/>
</dbReference>
<dbReference type="PDB" id="7UIK">
    <property type="method" value="EM"/>
    <property type="resolution" value="7.70 A"/>
    <property type="chains" value="b=1-431"/>
</dbReference>
<dbReference type="PDB" id="7UIL">
    <property type="method" value="EM"/>
    <property type="resolution" value="4.30 A"/>
    <property type="chains" value="1/b=1-431"/>
</dbReference>
<dbReference type="PDB" id="7UIO">
    <property type="method" value="EM"/>
    <property type="resolution" value="3.30 A"/>
    <property type="chains" value="Ab/Bb=1-431"/>
</dbReference>
<dbReference type="PDBsum" id="7UIC"/>
<dbReference type="PDBsum" id="7UIK"/>
<dbReference type="PDBsum" id="7UIL"/>
<dbReference type="PDBsum" id="7UIO"/>
<dbReference type="EMDB" id="EMD-26543"/>
<dbReference type="EMDB" id="EMD-26547"/>
<dbReference type="EMDB" id="EMD-26548"/>
<dbReference type="EMDB" id="EMD-26551"/>
<dbReference type="SMR" id="Q12124"/>
<dbReference type="BioGRID" id="32049">
    <property type="interactions" value="153"/>
</dbReference>
<dbReference type="ComplexPortal" id="CPX-3226">
    <property type="entry name" value="Core mediator complex"/>
</dbReference>
<dbReference type="DIP" id="DIP-2335N"/>
<dbReference type="FunCoup" id="Q12124">
    <property type="interactions" value="151"/>
</dbReference>
<dbReference type="IntAct" id="Q12124">
    <property type="interactions" value="62"/>
</dbReference>
<dbReference type="MINT" id="Q12124"/>
<dbReference type="STRING" id="4932.YDL005C"/>
<dbReference type="GlyGen" id="Q12124">
    <property type="glycosylation" value="1 site, 1 O-linked glycan (1 site)"/>
</dbReference>
<dbReference type="iPTMnet" id="Q12124"/>
<dbReference type="PaxDb" id="4932-YDL005C"/>
<dbReference type="PeptideAtlas" id="Q12124"/>
<dbReference type="EnsemblFungi" id="YDL005C_mRNA">
    <property type="protein sequence ID" value="YDL005C"/>
    <property type="gene ID" value="YDL005C"/>
</dbReference>
<dbReference type="GeneID" id="851559"/>
<dbReference type="KEGG" id="sce:YDL005C"/>
<dbReference type="AGR" id="SGD:S000002163"/>
<dbReference type="SGD" id="S000002163">
    <property type="gene designation" value="MED2"/>
</dbReference>
<dbReference type="VEuPathDB" id="FungiDB:YDL005C"/>
<dbReference type="eggNOG" id="ENOG502RZB6">
    <property type="taxonomic scope" value="Eukaryota"/>
</dbReference>
<dbReference type="HOGENOM" id="CLU_046031_0_0_1"/>
<dbReference type="InParanoid" id="Q12124"/>
<dbReference type="OMA" id="AEMMMQQ"/>
<dbReference type="OrthoDB" id="4069381at2759"/>
<dbReference type="BioCyc" id="YEAST:G3O-29436-MONOMER"/>
<dbReference type="BioGRID-ORCS" id="851559">
    <property type="hits" value="1 hit in 10 CRISPR screens"/>
</dbReference>
<dbReference type="PRO" id="PR:Q12124"/>
<dbReference type="Proteomes" id="UP000002311">
    <property type="component" value="Chromosome IV"/>
</dbReference>
<dbReference type="RNAct" id="Q12124">
    <property type="molecule type" value="protein"/>
</dbReference>
<dbReference type="GO" id="GO:0070847">
    <property type="term" value="C:core mediator complex"/>
    <property type="evidence" value="ECO:0000314"/>
    <property type="project" value="SGD"/>
</dbReference>
<dbReference type="GO" id="GO:0005829">
    <property type="term" value="C:cytosol"/>
    <property type="evidence" value="ECO:0000314"/>
    <property type="project" value="SGD"/>
</dbReference>
<dbReference type="GO" id="GO:0016592">
    <property type="term" value="C:mediator complex"/>
    <property type="evidence" value="ECO:0000314"/>
    <property type="project" value="SGD"/>
</dbReference>
<dbReference type="GO" id="GO:0005634">
    <property type="term" value="C:nucleus"/>
    <property type="evidence" value="ECO:0000314"/>
    <property type="project" value="SGD"/>
</dbReference>
<dbReference type="GO" id="GO:0061629">
    <property type="term" value="F:RNA polymerase II-specific DNA-binding transcription factor binding"/>
    <property type="evidence" value="ECO:0000353"/>
    <property type="project" value="SGD"/>
</dbReference>
<dbReference type="GO" id="GO:0003713">
    <property type="term" value="F:transcription coactivator activity"/>
    <property type="evidence" value="ECO:0000315"/>
    <property type="project" value="SGD"/>
</dbReference>
<dbReference type="GO" id="GO:0000122">
    <property type="term" value="P:negative regulation of transcription by RNA polymerase II"/>
    <property type="evidence" value="ECO:0000353"/>
    <property type="project" value="SGD"/>
</dbReference>
<dbReference type="GO" id="GO:0045944">
    <property type="term" value="P:positive regulation of transcription by RNA polymerase II"/>
    <property type="evidence" value="ECO:0000314"/>
    <property type="project" value="SGD"/>
</dbReference>
<dbReference type="GO" id="GO:0032968">
    <property type="term" value="P:positive regulation of transcription elongation by RNA polymerase II"/>
    <property type="evidence" value="ECO:0000314"/>
    <property type="project" value="ComplexPortal"/>
</dbReference>
<dbReference type="GO" id="GO:0060261">
    <property type="term" value="P:positive regulation of transcription initiation by RNA polymerase II"/>
    <property type="evidence" value="ECO:0000314"/>
    <property type="project" value="ComplexPortal"/>
</dbReference>
<dbReference type="GO" id="GO:0090399">
    <property type="term" value="P:replicative senescence"/>
    <property type="evidence" value="ECO:0000315"/>
    <property type="project" value="SGD"/>
</dbReference>
<dbReference type="GO" id="GO:0034976">
    <property type="term" value="P:response to endoplasmic reticulum stress"/>
    <property type="evidence" value="ECO:0000315"/>
    <property type="project" value="SGD"/>
</dbReference>
<dbReference type="GO" id="GO:0051123">
    <property type="term" value="P:RNA polymerase II preinitiation complex assembly"/>
    <property type="evidence" value="ECO:0000314"/>
    <property type="project" value="SGD"/>
</dbReference>
<dbReference type="InterPro" id="IPR021017">
    <property type="entry name" value="Mediator_Med2_fun"/>
</dbReference>
<dbReference type="Pfam" id="PF11214">
    <property type="entry name" value="Med2"/>
    <property type="match status" value="1"/>
</dbReference>
<sequence>MVVQNSPVSSVHTANFSERGSNTRTMTYKNKLTVCFDDILKVGAEMMMQQQLKNVQLDSYLVNGFSQSQQKLLKEKVKLFHGILDDLETSLSQSSSYLETLTALGKEKEKEREEAEKKRAEQENMRKVREQEELKKRQELEEASQQQQLQQNSKEKNGLGLNFSTTAPANTTDANGSKENYQELGSLQSSSQTQLENANAANNGAAFSPLTTTRIQSQQAQPSDVMFNDLNSMDISMFSGLDSTGFDSTAFNATVDETKGFDDNDSGNNYNDINISSIENNINNNINSTKNGKDNNNESNKNNNGDEKNKNNNEDNENNNNSSEKNNNNNNNNNNNNDDNGNNNNNNSGNDNNNTTNNDSNNKNNSITTGNDNENIVNNDLPTTVVSNPGDNPPPADNGEEYLTLNDFNDLNIDWSTTGDNGELDLSGFNI</sequence>
<reference key="1">
    <citation type="journal article" date="1997" name="Nature">
        <title>The nucleotide sequence of Saccharomyces cerevisiae chromosome IV.</title>
        <authorList>
            <person name="Jacq C."/>
            <person name="Alt-Moerbe J."/>
            <person name="Andre B."/>
            <person name="Arnold W."/>
            <person name="Bahr A."/>
            <person name="Ballesta J.P.G."/>
            <person name="Bargues M."/>
            <person name="Baron L."/>
            <person name="Becker A."/>
            <person name="Biteau N."/>
            <person name="Bloecker H."/>
            <person name="Blugeon C."/>
            <person name="Boskovic J."/>
            <person name="Brandt P."/>
            <person name="Brueckner M."/>
            <person name="Buitrago M.J."/>
            <person name="Coster F."/>
            <person name="Delaveau T."/>
            <person name="del Rey F."/>
            <person name="Dujon B."/>
            <person name="Eide L.G."/>
            <person name="Garcia-Cantalejo J.M."/>
            <person name="Goffeau A."/>
            <person name="Gomez-Peris A."/>
            <person name="Granotier C."/>
            <person name="Hanemann V."/>
            <person name="Hankeln T."/>
            <person name="Hoheisel J.D."/>
            <person name="Jaeger W."/>
            <person name="Jimenez A."/>
            <person name="Jonniaux J.-L."/>
            <person name="Kraemer C."/>
            <person name="Kuester H."/>
            <person name="Laamanen P."/>
            <person name="Legros Y."/>
            <person name="Louis E.J."/>
            <person name="Moeller-Rieker S."/>
            <person name="Monnet A."/>
            <person name="Moro M."/>
            <person name="Mueller-Auer S."/>
            <person name="Nussbaumer B."/>
            <person name="Paricio N."/>
            <person name="Paulin L."/>
            <person name="Perea J."/>
            <person name="Perez-Alonso M."/>
            <person name="Perez-Ortin J.E."/>
            <person name="Pohl T.M."/>
            <person name="Prydz H."/>
            <person name="Purnelle B."/>
            <person name="Rasmussen S.W."/>
            <person name="Remacha M.A."/>
            <person name="Revuelta J.L."/>
            <person name="Rieger M."/>
            <person name="Salom D."/>
            <person name="Saluz H.P."/>
            <person name="Saiz J.E."/>
            <person name="Saren A.-M."/>
            <person name="Schaefer M."/>
            <person name="Scharfe M."/>
            <person name="Schmidt E.R."/>
            <person name="Schneider C."/>
            <person name="Scholler P."/>
            <person name="Schwarz S."/>
            <person name="Soler-Mira A."/>
            <person name="Urrestarazu L.A."/>
            <person name="Verhasselt P."/>
            <person name="Vissers S."/>
            <person name="Voet M."/>
            <person name="Volckaert G."/>
            <person name="Wagner G."/>
            <person name="Wambutt R."/>
            <person name="Wedler E."/>
            <person name="Wedler H."/>
            <person name="Woelfl S."/>
            <person name="Harris D.E."/>
            <person name="Bowman S."/>
            <person name="Brown D."/>
            <person name="Churcher C.M."/>
            <person name="Connor R."/>
            <person name="Dedman K."/>
            <person name="Gentles S."/>
            <person name="Hamlin N."/>
            <person name="Hunt S."/>
            <person name="Jones L."/>
            <person name="McDonald S."/>
            <person name="Murphy L.D."/>
            <person name="Niblett D."/>
            <person name="Odell C."/>
            <person name="Oliver K."/>
            <person name="Rajandream M.A."/>
            <person name="Richards C."/>
            <person name="Shore L."/>
            <person name="Walsh S.V."/>
            <person name="Barrell B.G."/>
            <person name="Dietrich F.S."/>
            <person name="Mulligan J.T."/>
            <person name="Allen E."/>
            <person name="Araujo R."/>
            <person name="Aviles E."/>
            <person name="Berno A."/>
            <person name="Carpenter J."/>
            <person name="Chen E."/>
            <person name="Cherry J.M."/>
            <person name="Chung E."/>
            <person name="Duncan M."/>
            <person name="Hunicke-Smith S."/>
            <person name="Hyman R.W."/>
            <person name="Komp C."/>
            <person name="Lashkari D."/>
            <person name="Lew H."/>
            <person name="Lin D."/>
            <person name="Mosedale D."/>
            <person name="Nakahara K."/>
            <person name="Namath A."/>
            <person name="Oefner P."/>
            <person name="Oh C."/>
            <person name="Petel F.X."/>
            <person name="Roberts D."/>
            <person name="Schramm S."/>
            <person name="Schroeder M."/>
            <person name="Shogren T."/>
            <person name="Shroff N."/>
            <person name="Winant A."/>
            <person name="Yelton M.A."/>
            <person name="Botstein D."/>
            <person name="Davis R.W."/>
            <person name="Johnston M."/>
            <person name="Andrews S."/>
            <person name="Brinkman R."/>
            <person name="Cooper J."/>
            <person name="Ding H."/>
            <person name="Du Z."/>
            <person name="Favello A."/>
            <person name="Fulton L."/>
            <person name="Gattung S."/>
            <person name="Greco T."/>
            <person name="Hallsworth K."/>
            <person name="Hawkins J."/>
            <person name="Hillier L.W."/>
            <person name="Jier M."/>
            <person name="Johnson D."/>
            <person name="Johnston L."/>
            <person name="Kirsten J."/>
            <person name="Kucaba T."/>
            <person name="Langston Y."/>
            <person name="Latreille P."/>
            <person name="Le T."/>
            <person name="Mardis E."/>
            <person name="Menezes S."/>
            <person name="Miller N."/>
            <person name="Nhan M."/>
            <person name="Pauley A."/>
            <person name="Peluso D."/>
            <person name="Rifkin L."/>
            <person name="Riles L."/>
            <person name="Taich A."/>
            <person name="Trevaskis E."/>
            <person name="Vignati D."/>
            <person name="Wilcox L."/>
            <person name="Wohldman P."/>
            <person name="Vaudin M."/>
            <person name="Wilson R."/>
            <person name="Waterston R."/>
            <person name="Albermann K."/>
            <person name="Hani J."/>
            <person name="Heumann K."/>
            <person name="Kleine K."/>
            <person name="Mewes H.-W."/>
            <person name="Zollner A."/>
            <person name="Zaccaria P."/>
        </authorList>
    </citation>
    <scope>NUCLEOTIDE SEQUENCE [LARGE SCALE GENOMIC DNA]</scope>
    <source>
        <strain>ATCC 204508 / S288c</strain>
    </source>
</reference>
<reference key="2">
    <citation type="journal article" date="2014" name="G3 (Bethesda)">
        <title>The reference genome sequence of Saccharomyces cerevisiae: Then and now.</title>
        <authorList>
            <person name="Engel S.R."/>
            <person name="Dietrich F.S."/>
            <person name="Fisk D.G."/>
            <person name="Binkley G."/>
            <person name="Balakrishnan R."/>
            <person name="Costanzo M.C."/>
            <person name="Dwight S.S."/>
            <person name="Hitz B.C."/>
            <person name="Karra K."/>
            <person name="Nash R.S."/>
            <person name="Weng S."/>
            <person name="Wong E.D."/>
            <person name="Lloyd P."/>
            <person name="Skrzypek M.S."/>
            <person name="Miyasato S.R."/>
            <person name="Simison M."/>
            <person name="Cherry J.M."/>
        </authorList>
    </citation>
    <scope>GENOME REANNOTATION</scope>
    <source>
        <strain>ATCC 204508 / S288c</strain>
    </source>
</reference>
<reference key="3">
    <citation type="journal article" date="2007" name="Genome Res.">
        <title>Approaching a complete repository of sequence-verified protein-encoding clones for Saccharomyces cerevisiae.</title>
        <authorList>
            <person name="Hu Y."/>
            <person name="Rolfs A."/>
            <person name="Bhullar B."/>
            <person name="Murthy T.V.S."/>
            <person name="Zhu C."/>
            <person name="Berger M.F."/>
            <person name="Camargo A.A."/>
            <person name="Kelley F."/>
            <person name="McCarron S."/>
            <person name="Jepson D."/>
            <person name="Richardson A."/>
            <person name="Raphael J."/>
            <person name="Moreira D."/>
            <person name="Taycher E."/>
            <person name="Zuo D."/>
            <person name="Mohr S."/>
            <person name="Kane M.F."/>
            <person name="Williamson J."/>
            <person name="Simpson A.J.G."/>
            <person name="Bulyk M.L."/>
            <person name="Harlow E."/>
            <person name="Marsischky G."/>
            <person name="Kolodner R.D."/>
            <person name="LaBaer J."/>
        </authorList>
    </citation>
    <scope>NUCLEOTIDE SEQUENCE [GENOMIC DNA]</scope>
    <source>
        <strain>ATCC 204508 / S288c</strain>
    </source>
</reference>
<reference key="4">
    <citation type="journal article" date="1998" name="Genes Dev.">
        <title>The Med proteins of yeast and their function through the RNA polymerase II carboxy-terminal domain.</title>
        <authorList>
            <person name="Myers L.C."/>
            <person name="Gustafsson C.M."/>
            <person name="Bushnell D.A."/>
            <person name="Lui M."/>
            <person name="Erdjument-Bromage H."/>
            <person name="Tempst P."/>
            <person name="Kornberg R.D."/>
        </authorList>
    </citation>
    <scope>IDENTIFICATION BY MASS SPECTROMETRY</scope>
    <scope>COMPONENT OF MEDIATOR COMPLEX</scope>
</reference>
<reference key="5">
    <citation type="journal article" date="2003" name="Nature">
        <title>Global analysis of protein localization in budding yeast.</title>
        <authorList>
            <person name="Huh W.-K."/>
            <person name="Falvo J.V."/>
            <person name="Gerke L.C."/>
            <person name="Carroll A.S."/>
            <person name="Howson R.W."/>
            <person name="Weissman J.S."/>
            <person name="O'Shea E.K."/>
        </authorList>
    </citation>
    <scope>SUBCELLULAR LOCATION [LARGE SCALE ANALYSIS]</scope>
</reference>
<reference key="6">
    <citation type="journal article" date="2003" name="Nature">
        <title>Global analysis of protein expression in yeast.</title>
        <authorList>
            <person name="Ghaemmaghami S."/>
            <person name="Huh W.-K."/>
            <person name="Bower K."/>
            <person name="Howson R.W."/>
            <person name="Belle A."/>
            <person name="Dephoure N."/>
            <person name="O'Shea E.K."/>
            <person name="Weissman J.S."/>
        </authorList>
    </citation>
    <scope>LEVEL OF PROTEIN EXPRESSION [LARGE SCALE ANALYSIS]</scope>
</reference>
<reference key="7">
    <citation type="journal article" date="2004" name="Mol. Cell">
        <title>A unified nomenclature for protein subunits of mediator complexes linking transcriptional regulators to RNA polymerase II.</title>
        <authorList>
            <person name="Bourbon H.-M."/>
            <person name="Aguilera A."/>
            <person name="Ansari A.Z."/>
            <person name="Asturias F.J."/>
            <person name="Berk A.J."/>
            <person name="Bjoerklund S."/>
            <person name="Blackwell T.K."/>
            <person name="Borggrefe T."/>
            <person name="Carey M."/>
            <person name="Carlson M."/>
            <person name="Conaway J.W."/>
            <person name="Conaway R.C."/>
            <person name="Emmons S.W."/>
            <person name="Fondell J.D."/>
            <person name="Freedman L.P."/>
            <person name="Fukasawa T."/>
            <person name="Gustafsson C.M."/>
            <person name="Han M."/>
            <person name="He X."/>
            <person name="Herman P.K."/>
            <person name="Hinnebusch A.G."/>
            <person name="Holmberg S."/>
            <person name="Holstege F.C.P."/>
            <person name="Jaehning J.A."/>
            <person name="Kim Y.-J."/>
            <person name="Kuras L."/>
            <person name="Leutz A."/>
            <person name="Lis J.T."/>
            <person name="Meisterernest M."/>
            <person name="Naeaer A.M."/>
            <person name="Nasmyth K."/>
            <person name="Parvin J.D."/>
            <person name="Ptashne M."/>
            <person name="Reinberg D."/>
            <person name="Ronne H."/>
            <person name="Sadowski I."/>
            <person name="Sakurai H."/>
            <person name="Sipiczki M."/>
            <person name="Sternberg P.W."/>
            <person name="Stillman D.J."/>
            <person name="Strich R."/>
            <person name="Struhl K."/>
            <person name="Svejstrup J.Q."/>
            <person name="Tuck S."/>
            <person name="Winston F."/>
            <person name="Roeder R.G."/>
            <person name="Kornberg R.D."/>
        </authorList>
    </citation>
    <scope>NOMENCLATURE</scope>
</reference>
<reference key="8">
    <citation type="journal article" date="2004" name="Nucleic Acids Res.">
        <title>A high resolution protein interaction map of the yeast Mediator complex.</title>
        <authorList>
            <person name="Guglielmi B."/>
            <person name="van Berkum N.L."/>
            <person name="Klapholz B."/>
            <person name="Bijma T."/>
            <person name="Boube M."/>
            <person name="Boschiero C."/>
            <person name="Bourbon H.-M."/>
            <person name="Holstege F.C.P."/>
            <person name="Werner M."/>
        </authorList>
    </citation>
    <scope>TOPOLOGY OF THE MEDIATOR COMPLEX</scope>
</reference>
<reference key="9">
    <citation type="journal article" date="2004" name="Proc. Natl. Acad. Sci. U.S.A.">
        <title>Site-specific Srb10-dependent phosphorylation of the yeast Mediator subunit Med2 regulates gene expression from the 2-micrometer plasmid.</title>
        <authorList>
            <person name="Hallberg M."/>
            <person name="Polozkov G.V."/>
            <person name="Hu G.-Z."/>
            <person name="Beve J."/>
            <person name="Gustafsson C.M."/>
            <person name="Ronne H."/>
            <person name="Bjoerklund S."/>
        </authorList>
    </citation>
    <scope>INTERACTION WITH PDG1</scope>
    <scope>PHOSPHORYLATION AT SER-208</scope>
    <scope>MUTAGENESIS OF SER-208</scope>
</reference>
<reference key="10">
    <citation type="journal article" date="2005" name="J. Biol. Chem.">
        <title>Preponderance of free mediator in the yeast Saccharomyces cerevisiae.</title>
        <authorList>
            <person name="Takagi Y."/>
            <person name="Chadick J.Z."/>
            <person name="Davis J.A."/>
            <person name="Asturias F.J."/>
        </authorList>
    </citation>
    <scope>CHARACTERIZATION OF THE MEDIATOR COMPLEX</scope>
</reference>
<reference key="11">
    <citation type="journal article" date="2005" name="J. Biol. Chem.">
        <title>Mediator and TFIIH govern carboxyl-terminal domain-dependent transcription in yeast extracts.</title>
        <authorList>
            <person name="Nair D."/>
            <person name="Kim Y."/>
            <person name="Myers L.C."/>
        </authorList>
    </citation>
    <scope>FUNCTION OF THE MEDIATOR COMPLEX</scope>
</reference>
<reference key="12">
    <citation type="journal article" date="2005" name="Mol. Cell">
        <title>Mediator expression profiling epistasis reveals a signal transduction pathway with antagonistic submodules and highly specific downstream targets.</title>
        <authorList>
            <person name="van de Peppel J."/>
            <person name="Kettelarij N."/>
            <person name="van Bakel H."/>
            <person name="Kockelkorn T.T.J.P."/>
            <person name="van Leenen D."/>
            <person name="Holstege F.C.P."/>
        </authorList>
    </citation>
    <scope>FUNCTION</scope>
    <scope>PHOSPHORYLATION AT SER-208</scope>
    <scope>MUTAGENESIS OF SER-208</scope>
</reference>
<reference key="13">
    <citation type="journal article" date="2006" name="J. Biol. Chem.">
        <title>Mediator as a general transcription factor.</title>
        <authorList>
            <person name="Takagi Y."/>
            <person name="Kornberg R.D."/>
        </authorList>
    </citation>
    <scope>FUNCTION OF THE MEDIATOR COMPLEX</scope>
</reference>
<reference key="14">
    <citation type="journal article" date="2007" name="J. Biol. Chem.">
        <title>Med19(Rox3) regulates intermodule interactions in the Saccharomyces cerevisiae mediator complex.</title>
        <authorList>
            <person name="Baidoobonso S.M."/>
            <person name="Guidi B.W."/>
            <person name="Myers L.C."/>
        </authorList>
    </citation>
    <scope>CHARACTERIZATION OF THE MEDIATOR COMPLEX</scope>
    <scope>INTERACTION OF THE MEDIATOR COMPLEX WITH RNA POLYMERASE II</scope>
</reference>
<reference key="15">
    <citation type="journal article" date="2008" name="Mol. Cell. Proteomics">
        <title>A multidimensional chromatography technology for in-depth phosphoproteome analysis.</title>
        <authorList>
            <person name="Albuquerque C.P."/>
            <person name="Smolka M.B."/>
            <person name="Payne S.H."/>
            <person name="Bafna V."/>
            <person name="Eng J."/>
            <person name="Zhou H."/>
        </authorList>
    </citation>
    <scope>PHOSPHORYLATION [LARGE SCALE ANALYSIS] AT SER-6</scope>
    <scope>IDENTIFICATION BY MASS SPECTROMETRY [LARGE SCALE ANALYSIS]</scope>
</reference>
<reference key="16">
    <citation type="journal article" date="2002" name="Mol. Cell">
        <title>Structure of the yeast RNA polymerase II holoenzyme: mediator conformation and polymerase interaction.</title>
        <authorList>
            <person name="Davis J.A."/>
            <person name="Takagi Y."/>
            <person name="Kornberg R.D."/>
            <person name="Asturias F.J."/>
        </authorList>
    </citation>
    <scope>ELECTRON MICROSCOPY OF MEDIATOR COMPLEX IN COMPLEX WITH RNA POLYMERASE II</scope>
</reference>
<evidence type="ECO:0000256" key="1">
    <source>
        <dbReference type="SAM" id="MobiDB-lite"/>
    </source>
</evidence>
<evidence type="ECO:0000269" key="2">
    <source>
    </source>
</evidence>
<evidence type="ECO:0000269" key="3">
    <source>
    </source>
</evidence>
<evidence type="ECO:0000269" key="4">
    <source>
    </source>
</evidence>
<evidence type="ECO:0000269" key="5">
    <source>
    </source>
</evidence>
<evidence type="ECO:0000269" key="6">
    <source>
    </source>
</evidence>
<evidence type="ECO:0000269" key="7">
    <source>
    </source>
</evidence>
<evidence type="ECO:0000269" key="8">
    <source>
    </source>
</evidence>
<evidence type="ECO:0000305" key="9"/>
<evidence type="ECO:0007744" key="10">
    <source>
    </source>
</evidence>
<keyword id="KW-0002">3D-structure</keyword>
<keyword id="KW-0010">Activator</keyword>
<keyword id="KW-0539">Nucleus</keyword>
<keyword id="KW-0597">Phosphoprotein</keyword>
<keyword id="KW-1185">Reference proteome</keyword>
<keyword id="KW-0804">Transcription</keyword>
<keyword id="KW-0805">Transcription regulation</keyword>
<feature type="chain" id="PRO_0000096381" description="Mediator of RNA polymerase II transcription subunit 2">
    <location>
        <begin position="1"/>
        <end position="431"/>
    </location>
</feature>
<feature type="region of interest" description="Disordered" evidence="1">
    <location>
        <begin position="105"/>
        <end position="178"/>
    </location>
</feature>
<feature type="region of interest" description="Disordered" evidence="1">
    <location>
        <begin position="284"/>
        <end position="399"/>
    </location>
</feature>
<feature type="compositionally biased region" description="Basic and acidic residues" evidence="1">
    <location>
        <begin position="105"/>
        <end position="140"/>
    </location>
</feature>
<feature type="compositionally biased region" description="Low complexity" evidence="1">
    <location>
        <begin position="143"/>
        <end position="152"/>
    </location>
</feature>
<feature type="compositionally biased region" description="Polar residues" evidence="1">
    <location>
        <begin position="162"/>
        <end position="178"/>
    </location>
</feature>
<feature type="compositionally biased region" description="Basic and acidic residues" evidence="1">
    <location>
        <begin position="304"/>
        <end position="313"/>
    </location>
</feature>
<feature type="compositionally biased region" description="Low complexity" evidence="1">
    <location>
        <begin position="318"/>
        <end position="365"/>
    </location>
</feature>
<feature type="compositionally biased region" description="Polar residues" evidence="1">
    <location>
        <begin position="366"/>
        <end position="387"/>
    </location>
</feature>
<feature type="modified residue" description="Phosphoserine" evidence="10">
    <location>
        <position position="6"/>
    </location>
</feature>
<feature type="modified residue" description="Phosphoserine; by CDK8" evidence="4 6">
    <location>
        <position position="208"/>
    </location>
</feature>
<feature type="mutagenesis site" description="Reduces expression of several genes from the endogenous 2-micron plasmid and augments expression of numerous iron-response genes." evidence="4 6">
    <original>S</original>
    <variation>A</variation>
    <location>
        <position position="208"/>
    </location>
</feature>
<accession>Q12124</accession>
<accession>D6VRY3</accession>
<comment type="function">
    <text evidence="5 6 7">Component of the Mediator complex, a coactivator involved in the regulated transcription of nearly all RNA polymerase II-dependent genes. Mediator functions as a bridge to convey information from gene-specific regulatory proteins to the basal RNA polymerase II transcription machinery. The Mediator complex, having a compact conformation in its free form, is recruited to promoters by direct interactions with regulatory proteins and serves for the assembly of a functional preinitiation complex with RNA polymerase II and the general transcription factors. The Mediator complex unfolds to an extended conformation and partially surrounds RNA polymerase II, specifically interacting with the unphosphorylated form of the C-terminal domain (CTD) of RNA polymerase II. The Mediator complex dissociates from the RNA polymerase II holoenzyme and stays at the promoter when transcriptional elongation begins.</text>
</comment>
<comment type="subunit">
    <text evidence="4 8">Component of the Mediator complex, which is composed of at least 21 subunits that form three structurally distinct submodules. The Mediator head module contains MED6, MED8, MED11, SRB4/MED17, SRB5/MED18, ROX3/MED19, SRB2/MED20 and SRB6/MED22, the middle module contains MED1, MED4, NUT1/MED5, MED7, CSE2/MED9, NUT2/MED10, SRB7/MED21 and SOH1/MED31, and the tail module contains MED2, PGD1/MED3, RGR1/MED14, GAL11/MED15 and SIN4/MED16. The head and the middle modules interact directly with RNA polymerase II, whereas the elongated tail module interacts with gene-specific regulatory proteins.</text>
</comment>
<comment type="subcellular location">
    <subcellularLocation>
        <location evidence="2">Nucleus</location>
    </subcellularLocation>
</comment>
<comment type="miscellaneous">
    <text evidence="3">Present with 10785 molecules/cell in log phase SD medium.</text>
</comment>
<comment type="similarity">
    <text evidence="9">Belongs to the mediator complex subunit 2 family.</text>
</comment>
<protein>
    <recommendedName>
        <fullName>Mediator of RNA polymerase II transcription subunit 2</fullName>
    </recommendedName>
    <alternativeName>
        <fullName>Mediator complex subunit 2</fullName>
    </alternativeName>
</protein>